<name>RL9_RICRO</name>
<reference key="1">
    <citation type="journal article" date="2008" name="Infect. Immun.">
        <title>Genomic comparison of virulent Rickettsia rickettsii Sheila Smith and avirulent Rickettsia rickettsii Iowa.</title>
        <authorList>
            <person name="Ellison D.W."/>
            <person name="Clark T.R."/>
            <person name="Sturdevant D.E."/>
            <person name="Virtaneva K."/>
            <person name="Porcella S.F."/>
            <person name="Hackstadt T."/>
        </authorList>
    </citation>
    <scope>NUCLEOTIDE SEQUENCE [LARGE SCALE GENOMIC DNA]</scope>
    <source>
        <strain>Iowa</strain>
    </source>
</reference>
<organism>
    <name type="scientific">Rickettsia rickettsii (strain Iowa)</name>
    <dbReference type="NCBI Taxonomy" id="452659"/>
    <lineage>
        <taxon>Bacteria</taxon>
        <taxon>Pseudomonadati</taxon>
        <taxon>Pseudomonadota</taxon>
        <taxon>Alphaproteobacteria</taxon>
        <taxon>Rickettsiales</taxon>
        <taxon>Rickettsiaceae</taxon>
        <taxon>Rickettsieae</taxon>
        <taxon>Rickettsia</taxon>
        <taxon>spotted fever group</taxon>
    </lineage>
</organism>
<feature type="chain" id="PRO_1000081495" description="Large ribosomal subunit protein bL9">
    <location>
        <begin position="1"/>
        <end position="171"/>
    </location>
</feature>
<dbReference type="EMBL" id="CP000766">
    <property type="protein sequence ID" value="ABY72008.1"/>
    <property type="molecule type" value="Genomic_DNA"/>
</dbReference>
<dbReference type="RefSeq" id="WP_012150293.1">
    <property type="nucleotide sequence ID" value="NC_010263.3"/>
</dbReference>
<dbReference type="SMR" id="B0BVY2"/>
<dbReference type="GeneID" id="79936868"/>
<dbReference type="KEGG" id="rrj:RrIowa_0086"/>
<dbReference type="eggNOG" id="COG0359">
    <property type="taxonomic scope" value="Bacteria"/>
</dbReference>
<dbReference type="HOGENOM" id="CLU_078938_3_0_5"/>
<dbReference type="Proteomes" id="UP000000796">
    <property type="component" value="Chromosome"/>
</dbReference>
<dbReference type="GO" id="GO:1990904">
    <property type="term" value="C:ribonucleoprotein complex"/>
    <property type="evidence" value="ECO:0007669"/>
    <property type="project" value="UniProtKB-KW"/>
</dbReference>
<dbReference type="GO" id="GO:0005840">
    <property type="term" value="C:ribosome"/>
    <property type="evidence" value="ECO:0007669"/>
    <property type="project" value="UniProtKB-KW"/>
</dbReference>
<dbReference type="GO" id="GO:0019843">
    <property type="term" value="F:rRNA binding"/>
    <property type="evidence" value="ECO:0007669"/>
    <property type="project" value="UniProtKB-UniRule"/>
</dbReference>
<dbReference type="GO" id="GO:0003735">
    <property type="term" value="F:structural constituent of ribosome"/>
    <property type="evidence" value="ECO:0007669"/>
    <property type="project" value="InterPro"/>
</dbReference>
<dbReference type="GO" id="GO:0006412">
    <property type="term" value="P:translation"/>
    <property type="evidence" value="ECO:0007669"/>
    <property type="project" value="UniProtKB-UniRule"/>
</dbReference>
<dbReference type="Gene3D" id="3.10.430.100">
    <property type="entry name" value="Ribosomal protein L9, C-terminal domain"/>
    <property type="match status" value="1"/>
</dbReference>
<dbReference type="Gene3D" id="3.40.5.10">
    <property type="entry name" value="Ribosomal protein L9, N-terminal domain"/>
    <property type="match status" value="1"/>
</dbReference>
<dbReference type="HAMAP" id="MF_00503">
    <property type="entry name" value="Ribosomal_bL9"/>
    <property type="match status" value="1"/>
</dbReference>
<dbReference type="InterPro" id="IPR000244">
    <property type="entry name" value="Ribosomal_bL9"/>
</dbReference>
<dbReference type="InterPro" id="IPR009027">
    <property type="entry name" value="Ribosomal_bL9/RNase_H1_N"/>
</dbReference>
<dbReference type="InterPro" id="IPR020594">
    <property type="entry name" value="Ribosomal_bL9_bac/chp"/>
</dbReference>
<dbReference type="InterPro" id="IPR020069">
    <property type="entry name" value="Ribosomal_bL9_C"/>
</dbReference>
<dbReference type="InterPro" id="IPR036791">
    <property type="entry name" value="Ribosomal_bL9_C_sf"/>
</dbReference>
<dbReference type="InterPro" id="IPR020070">
    <property type="entry name" value="Ribosomal_bL9_N"/>
</dbReference>
<dbReference type="InterPro" id="IPR036935">
    <property type="entry name" value="Ribosomal_bL9_N_sf"/>
</dbReference>
<dbReference type="NCBIfam" id="TIGR00158">
    <property type="entry name" value="L9"/>
    <property type="match status" value="1"/>
</dbReference>
<dbReference type="PANTHER" id="PTHR21368">
    <property type="entry name" value="50S RIBOSOMAL PROTEIN L9"/>
    <property type="match status" value="1"/>
</dbReference>
<dbReference type="Pfam" id="PF03948">
    <property type="entry name" value="Ribosomal_L9_C"/>
    <property type="match status" value="1"/>
</dbReference>
<dbReference type="Pfam" id="PF01281">
    <property type="entry name" value="Ribosomal_L9_N"/>
    <property type="match status" value="1"/>
</dbReference>
<dbReference type="SUPFAM" id="SSF55658">
    <property type="entry name" value="L9 N-domain-like"/>
    <property type="match status" value="1"/>
</dbReference>
<dbReference type="SUPFAM" id="SSF55653">
    <property type="entry name" value="Ribosomal protein L9 C-domain"/>
    <property type="match status" value="1"/>
</dbReference>
<dbReference type="PROSITE" id="PS00651">
    <property type="entry name" value="RIBOSOMAL_L9"/>
    <property type="match status" value="1"/>
</dbReference>
<protein>
    <recommendedName>
        <fullName evidence="1">Large ribosomal subunit protein bL9</fullName>
    </recommendedName>
    <alternativeName>
        <fullName evidence="2">50S ribosomal protein L9</fullName>
    </alternativeName>
</protein>
<evidence type="ECO:0000255" key="1">
    <source>
        <dbReference type="HAMAP-Rule" id="MF_00503"/>
    </source>
</evidence>
<evidence type="ECO:0000305" key="2"/>
<accession>B0BVY2</accession>
<comment type="function">
    <text evidence="1">Binds to the 23S rRNA.</text>
</comment>
<comment type="similarity">
    <text evidence="1">Belongs to the bacterial ribosomal protein bL9 family.</text>
</comment>
<keyword id="KW-0687">Ribonucleoprotein</keyword>
<keyword id="KW-0689">Ribosomal protein</keyword>
<keyword id="KW-0694">RNA-binding</keyword>
<keyword id="KW-0699">rRNA-binding</keyword>
<gene>
    <name evidence="1" type="primary">rplI</name>
    <name type="ordered locus">RrIowa_0086</name>
</gene>
<sequence length="171" mass="19372">MEIILIKPVRKLGKIGDILKVADGFGRNYLLPQKLAIRATEPNKELIVKQKHEFEAKDKQIREEVEKINALIKDQQLVFIRQTSNDGKLFGSVTNKEIANKLSENISYNISHSNVILDKQIKSTGIYTVEIRLHAELNAIVTVIVARSESEAQDYLREQKTETSEDLAESA</sequence>
<proteinExistence type="inferred from homology"/>